<reference key="1">
    <citation type="submission" date="2000-11" db="EMBL/GenBank/DDBJ databases">
        <title>A plant p23: the missing link suggesting glucocorticoid receptors exist in plants.</title>
        <authorList>
            <person name="Bowra S."/>
        </authorList>
    </citation>
    <scope>NUCLEOTIDE SEQUENCE [MRNA] (ISOFORM 2)</scope>
</reference>
<reference key="2">
    <citation type="journal article" date="1999" name="Nature">
        <title>Sequence and analysis of chromosome 4 of the plant Arabidopsis thaliana.</title>
        <authorList>
            <person name="Mayer K.F.X."/>
            <person name="Schueller C."/>
            <person name="Wambutt R."/>
            <person name="Murphy G."/>
            <person name="Volckaert G."/>
            <person name="Pohl T."/>
            <person name="Duesterhoeft A."/>
            <person name="Stiekema W."/>
            <person name="Entian K.-D."/>
            <person name="Terryn N."/>
            <person name="Harris B."/>
            <person name="Ansorge W."/>
            <person name="Brandt P."/>
            <person name="Grivell L.A."/>
            <person name="Rieger M."/>
            <person name="Weichselgartner M."/>
            <person name="de Simone V."/>
            <person name="Obermaier B."/>
            <person name="Mache R."/>
            <person name="Mueller M."/>
            <person name="Kreis M."/>
            <person name="Delseny M."/>
            <person name="Puigdomenech P."/>
            <person name="Watson M."/>
            <person name="Schmidtheini T."/>
            <person name="Reichert B."/>
            <person name="Portetelle D."/>
            <person name="Perez-Alonso M."/>
            <person name="Boutry M."/>
            <person name="Bancroft I."/>
            <person name="Vos P."/>
            <person name="Hoheisel J."/>
            <person name="Zimmermann W."/>
            <person name="Wedler H."/>
            <person name="Ridley P."/>
            <person name="Langham S.-A."/>
            <person name="McCullagh B."/>
            <person name="Bilham L."/>
            <person name="Robben J."/>
            <person name="van der Schueren J."/>
            <person name="Grymonprez B."/>
            <person name="Chuang Y.-J."/>
            <person name="Vandenbussche F."/>
            <person name="Braeken M."/>
            <person name="Weltjens I."/>
            <person name="Voet M."/>
            <person name="Bastiaens I."/>
            <person name="Aert R."/>
            <person name="Defoor E."/>
            <person name="Weitzenegger T."/>
            <person name="Bothe G."/>
            <person name="Ramsperger U."/>
            <person name="Hilbert H."/>
            <person name="Braun M."/>
            <person name="Holzer E."/>
            <person name="Brandt A."/>
            <person name="Peters S."/>
            <person name="van Staveren M."/>
            <person name="Dirkse W."/>
            <person name="Mooijman P."/>
            <person name="Klein Lankhorst R."/>
            <person name="Rose M."/>
            <person name="Hauf J."/>
            <person name="Koetter P."/>
            <person name="Berneiser S."/>
            <person name="Hempel S."/>
            <person name="Feldpausch M."/>
            <person name="Lamberth S."/>
            <person name="Van den Daele H."/>
            <person name="De Keyser A."/>
            <person name="Buysshaert C."/>
            <person name="Gielen J."/>
            <person name="Villarroel R."/>
            <person name="De Clercq R."/>
            <person name="van Montagu M."/>
            <person name="Rogers J."/>
            <person name="Cronin A."/>
            <person name="Quail M.A."/>
            <person name="Bray-Allen S."/>
            <person name="Clark L."/>
            <person name="Doggett J."/>
            <person name="Hall S."/>
            <person name="Kay M."/>
            <person name="Lennard N."/>
            <person name="McLay K."/>
            <person name="Mayes R."/>
            <person name="Pettett A."/>
            <person name="Rajandream M.A."/>
            <person name="Lyne M."/>
            <person name="Benes V."/>
            <person name="Rechmann S."/>
            <person name="Borkova D."/>
            <person name="Bloecker H."/>
            <person name="Scharfe M."/>
            <person name="Grimm M."/>
            <person name="Loehnert T.-H."/>
            <person name="Dose S."/>
            <person name="de Haan M."/>
            <person name="Maarse A.C."/>
            <person name="Schaefer M."/>
            <person name="Mueller-Auer S."/>
            <person name="Gabel C."/>
            <person name="Fuchs M."/>
            <person name="Fartmann B."/>
            <person name="Granderath K."/>
            <person name="Dauner D."/>
            <person name="Herzl A."/>
            <person name="Neumann S."/>
            <person name="Argiriou A."/>
            <person name="Vitale D."/>
            <person name="Liguori R."/>
            <person name="Piravandi E."/>
            <person name="Massenet O."/>
            <person name="Quigley F."/>
            <person name="Clabauld G."/>
            <person name="Muendlein A."/>
            <person name="Felber R."/>
            <person name="Schnabl S."/>
            <person name="Hiller R."/>
            <person name="Schmidt W."/>
            <person name="Lecharny A."/>
            <person name="Aubourg S."/>
            <person name="Chefdor F."/>
            <person name="Cooke R."/>
            <person name="Berger C."/>
            <person name="Monfort A."/>
            <person name="Casacuberta E."/>
            <person name="Gibbons T."/>
            <person name="Weber N."/>
            <person name="Vandenbol M."/>
            <person name="Bargues M."/>
            <person name="Terol J."/>
            <person name="Torres A."/>
            <person name="Perez-Perez A."/>
            <person name="Purnelle B."/>
            <person name="Bent E."/>
            <person name="Johnson S."/>
            <person name="Tacon D."/>
            <person name="Jesse T."/>
            <person name="Heijnen L."/>
            <person name="Schwarz S."/>
            <person name="Scholler P."/>
            <person name="Heber S."/>
            <person name="Francs P."/>
            <person name="Bielke C."/>
            <person name="Frishman D."/>
            <person name="Haase D."/>
            <person name="Lemcke K."/>
            <person name="Mewes H.-W."/>
            <person name="Stocker S."/>
            <person name="Zaccaria P."/>
            <person name="Bevan M."/>
            <person name="Wilson R.K."/>
            <person name="de la Bastide M."/>
            <person name="Habermann K."/>
            <person name="Parnell L."/>
            <person name="Dedhia N."/>
            <person name="Gnoj L."/>
            <person name="Schutz K."/>
            <person name="Huang E."/>
            <person name="Spiegel L."/>
            <person name="Sekhon M."/>
            <person name="Murray J."/>
            <person name="Sheet P."/>
            <person name="Cordes M."/>
            <person name="Abu-Threideh J."/>
            <person name="Stoneking T."/>
            <person name="Kalicki J."/>
            <person name="Graves T."/>
            <person name="Harmon G."/>
            <person name="Edwards J."/>
            <person name="Latreille P."/>
            <person name="Courtney L."/>
            <person name="Cloud J."/>
            <person name="Abbott A."/>
            <person name="Scott K."/>
            <person name="Johnson D."/>
            <person name="Minx P."/>
            <person name="Bentley D."/>
            <person name="Fulton B."/>
            <person name="Miller N."/>
            <person name="Greco T."/>
            <person name="Kemp K."/>
            <person name="Kramer J."/>
            <person name="Fulton L."/>
            <person name="Mardis E."/>
            <person name="Dante M."/>
            <person name="Pepin K."/>
            <person name="Hillier L.W."/>
            <person name="Nelson J."/>
            <person name="Spieth J."/>
            <person name="Ryan E."/>
            <person name="Andrews S."/>
            <person name="Geisel C."/>
            <person name="Layman D."/>
            <person name="Du H."/>
            <person name="Ali J."/>
            <person name="Berghoff A."/>
            <person name="Jones K."/>
            <person name="Drone K."/>
            <person name="Cotton M."/>
            <person name="Joshu C."/>
            <person name="Antonoiu B."/>
            <person name="Zidanic M."/>
            <person name="Strong C."/>
            <person name="Sun H."/>
            <person name="Lamar B."/>
            <person name="Yordan C."/>
            <person name="Ma P."/>
            <person name="Zhong J."/>
            <person name="Preston R."/>
            <person name="Vil D."/>
            <person name="Shekher M."/>
            <person name="Matero A."/>
            <person name="Shah R."/>
            <person name="Swaby I.K."/>
            <person name="O'Shaughnessy A."/>
            <person name="Rodriguez M."/>
            <person name="Hoffman J."/>
            <person name="Till S."/>
            <person name="Granat S."/>
            <person name="Shohdy N."/>
            <person name="Hasegawa A."/>
            <person name="Hameed A."/>
            <person name="Lodhi M."/>
            <person name="Johnson A."/>
            <person name="Chen E."/>
            <person name="Marra M.A."/>
            <person name="Martienssen R."/>
            <person name="McCombie W.R."/>
        </authorList>
    </citation>
    <scope>NUCLEOTIDE SEQUENCE [LARGE SCALE GENOMIC DNA]</scope>
    <source>
        <strain>cv. Columbia</strain>
    </source>
</reference>
<reference key="3">
    <citation type="journal article" date="2017" name="Plant J.">
        <title>Araport11: a complete reannotation of the Arabidopsis thaliana reference genome.</title>
        <authorList>
            <person name="Cheng C.Y."/>
            <person name="Krishnakumar V."/>
            <person name="Chan A.P."/>
            <person name="Thibaud-Nissen F."/>
            <person name="Schobel S."/>
            <person name="Town C.D."/>
        </authorList>
    </citation>
    <scope>GENOME REANNOTATION</scope>
    <source>
        <strain>cv. Columbia</strain>
    </source>
</reference>
<reference key="4">
    <citation type="journal article" date="2003" name="Science">
        <title>Empirical analysis of transcriptional activity in the Arabidopsis genome.</title>
        <authorList>
            <person name="Yamada K."/>
            <person name="Lim J."/>
            <person name="Dale J.M."/>
            <person name="Chen H."/>
            <person name="Shinn P."/>
            <person name="Palm C.J."/>
            <person name="Southwick A.M."/>
            <person name="Wu H.C."/>
            <person name="Kim C.J."/>
            <person name="Nguyen M."/>
            <person name="Pham P.K."/>
            <person name="Cheuk R.F."/>
            <person name="Karlin-Newmann G."/>
            <person name="Liu S.X."/>
            <person name="Lam B."/>
            <person name="Sakano H."/>
            <person name="Wu T."/>
            <person name="Yu G."/>
            <person name="Miranda M."/>
            <person name="Quach H.L."/>
            <person name="Tripp M."/>
            <person name="Chang C.H."/>
            <person name="Lee J.M."/>
            <person name="Toriumi M.J."/>
            <person name="Chan M.M."/>
            <person name="Tang C.C."/>
            <person name="Onodera C.S."/>
            <person name="Deng J.M."/>
            <person name="Akiyama K."/>
            <person name="Ansari Y."/>
            <person name="Arakawa T."/>
            <person name="Banh J."/>
            <person name="Banno F."/>
            <person name="Bowser L."/>
            <person name="Brooks S.Y."/>
            <person name="Carninci P."/>
            <person name="Chao Q."/>
            <person name="Choy N."/>
            <person name="Enju A."/>
            <person name="Goldsmith A.D."/>
            <person name="Gurjal M."/>
            <person name="Hansen N.F."/>
            <person name="Hayashizaki Y."/>
            <person name="Johnson-Hopson C."/>
            <person name="Hsuan V.W."/>
            <person name="Iida K."/>
            <person name="Karnes M."/>
            <person name="Khan S."/>
            <person name="Koesema E."/>
            <person name="Ishida J."/>
            <person name="Jiang P.X."/>
            <person name="Jones T."/>
            <person name="Kawai J."/>
            <person name="Kamiya A."/>
            <person name="Meyers C."/>
            <person name="Nakajima M."/>
            <person name="Narusaka M."/>
            <person name="Seki M."/>
            <person name="Sakurai T."/>
            <person name="Satou M."/>
            <person name="Tamse R."/>
            <person name="Vaysberg M."/>
            <person name="Wallender E.K."/>
            <person name="Wong C."/>
            <person name="Yamamura Y."/>
            <person name="Yuan S."/>
            <person name="Shinozaki K."/>
            <person name="Davis R.W."/>
            <person name="Theologis A."/>
            <person name="Ecker J.R."/>
        </authorList>
    </citation>
    <scope>NUCLEOTIDE SEQUENCE [LARGE SCALE MRNA] (ISOFORM 1)</scope>
    <source>
        <strain>cv. Columbia</strain>
    </source>
</reference>
<reference key="5">
    <citation type="journal article" date="2009" name="Plant Physiol.">
        <title>Large-scale Arabidopsis phosphoproteome profiling reveals novel chloroplast kinase substrates and phosphorylation networks.</title>
        <authorList>
            <person name="Reiland S."/>
            <person name="Messerli G."/>
            <person name="Baerenfaller K."/>
            <person name="Gerrits B."/>
            <person name="Endler A."/>
            <person name="Grossmann J."/>
            <person name="Gruissem W."/>
            <person name="Baginsky S."/>
        </authorList>
    </citation>
    <scope>IDENTIFICATION BY MASS SPECTROMETRY [LARGE SCALE ANALYSIS]</scope>
</reference>
<reference key="6">
    <citation type="journal article" date="2010" name="Cell Stress Chaperones">
        <title>Characterization of plant p23-like proteins for their co-chaperone activities.</title>
        <authorList>
            <person name="Zhang Z."/>
            <person name="Sullivan W."/>
            <person name="Felts S.J."/>
            <person name="Prasad B.D."/>
            <person name="Toft D.O."/>
            <person name="Krishna P."/>
        </authorList>
    </citation>
    <scope>INDUCTION BY HEAT</scope>
    <scope>INTERACTION WITH HSP90</scope>
    <scope>FUNCTION</scope>
</reference>
<reference key="7">
    <citation type="journal article" date="2010" name="J. Plant Physiol.">
        <title>Expression of five AtHsp90 genes in Saccharomyces cerevisiae reveals functional differences of AtHsp90s under abiotic stresses.</title>
        <authorList>
            <person name="Song H."/>
            <person name="Fan P."/>
            <person name="Shi W."/>
            <person name="Zhao R."/>
            <person name="Li Y."/>
        </authorList>
    </citation>
    <scope>INTERACTION WITH HSP90-5; HSP90-6 AND HSP90-7</scope>
</reference>
<reference key="8">
    <citation type="journal article" date="2015" name="J. Exp. Bot.">
        <title>The co-chaperone p23 controls root development through the modulation of auxin distribution in the Arabidopsis root meristem.</title>
        <authorList>
            <person name="D'Alessandro S."/>
            <person name="Golin S."/>
            <person name="Hardtke C.S."/>
            <person name="Lo Schiavo F."/>
            <person name="Zottini M."/>
        </authorList>
    </citation>
    <scope>FUNCTION</scope>
    <scope>DISRUPTION PHENOTYPE</scope>
    <scope>TISSUE SPECIFICITY</scope>
    <scope>SUBCELLULAR LOCATION</scope>
</reference>
<organism>
    <name type="scientific">Arabidopsis thaliana</name>
    <name type="common">Mouse-ear cress</name>
    <dbReference type="NCBI Taxonomy" id="3702"/>
    <lineage>
        <taxon>Eukaryota</taxon>
        <taxon>Viridiplantae</taxon>
        <taxon>Streptophyta</taxon>
        <taxon>Embryophyta</taxon>
        <taxon>Tracheophyta</taxon>
        <taxon>Spermatophyta</taxon>
        <taxon>Magnoliopsida</taxon>
        <taxon>eudicotyledons</taxon>
        <taxon>Gunneridae</taxon>
        <taxon>Pentapetalae</taxon>
        <taxon>rosids</taxon>
        <taxon>malvids</taxon>
        <taxon>Brassicales</taxon>
        <taxon>Brassicaceae</taxon>
        <taxon>Camelineae</taxon>
        <taxon>Arabidopsis</taxon>
    </lineage>
</organism>
<evidence type="ECO:0000255" key="1">
    <source>
        <dbReference type="PROSITE-ProRule" id="PRU00547"/>
    </source>
</evidence>
<evidence type="ECO:0000256" key="2">
    <source>
        <dbReference type="SAM" id="MobiDB-lite"/>
    </source>
</evidence>
<evidence type="ECO:0000269" key="3">
    <source>
    </source>
</evidence>
<evidence type="ECO:0000269" key="4">
    <source>
    </source>
</evidence>
<evidence type="ECO:0000269" key="5">
    <source>
    </source>
</evidence>
<evidence type="ECO:0000303" key="6">
    <source>
    </source>
</evidence>
<evidence type="ECO:0000305" key="7"/>
<evidence type="ECO:0000312" key="8">
    <source>
        <dbReference type="Araport" id="AT4G02450"/>
    </source>
</evidence>
<evidence type="ECO:0000312" key="9">
    <source>
        <dbReference type="EMBL" id="AAC19287.1"/>
    </source>
</evidence>
<evidence type="ECO:0000312" key="10">
    <source>
        <dbReference type="EMBL" id="CAC16575.1"/>
    </source>
</evidence>
<dbReference type="EMBL" id="AJ297951">
    <property type="protein sequence ID" value="CAC16575.1"/>
    <property type="molecule type" value="mRNA"/>
</dbReference>
<dbReference type="EMBL" id="AF069298">
    <property type="protein sequence ID" value="AAC19287.1"/>
    <property type="status" value="ALT_SEQ"/>
    <property type="molecule type" value="Genomic_DNA"/>
</dbReference>
<dbReference type="EMBL" id="AL161494">
    <property type="protein sequence ID" value="CAB80738.1"/>
    <property type="status" value="ALT_SEQ"/>
    <property type="molecule type" value="Genomic_DNA"/>
</dbReference>
<dbReference type="EMBL" id="CP002687">
    <property type="protein sequence ID" value="AEE82173.1"/>
    <property type="molecule type" value="Genomic_DNA"/>
</dbReference>
<dbReference type="EMBL" id="AY126999">
    <property type="protein sequence ID" value="AAM83226.1"/>
    <property type="molecule type" value="mRNA"/>
</dbReference>
<dbReference type="EMBL" id="BT000527">
    <property type="protein sequence ID" value="AAN18096.1"/>
    <property type="molecule type" value="mRNA"/>
</dbReference>
<dbReference type="PIR" id="T01305">
    <property type="entry name" value="T01305"/>
</dbReference>
<dbReference type="RefSeq" id="NP_192154.2">
    <molecule id="Q8L7U4-1"/>
    <property type="nucleotide sequence ID" value="NM_116478.5"/>
</dbReference>
<dbReference type="SMR" id="Q8L7U4"/>
<dbReference type="FunCoup" id="Q8L7U4">
    <property type="interactions" value="865"/>
</dbReference>
<dbReference type="IntAct" id="Q8L7U4">
    <property type="interactions" value="1"/>
</dbReference>
<dbReference type="MINT" id="Q8L7U4"/>
<dbReference type="STRING" id="3702.Q8L7U4"/>
<dbReference type="iPTMnet" id="Q8L7U4"/>
<dbReference type="PaxDb" id="3702-AT4G02450.1"/>
<dbReference type="EnsemblPlants" id="AT4G02450.1">
    <molecule id="Q8L7U4-1"/>
    <property type="protein sequence ID" value="AT4G02450.1"/>
    <property type="gene ID" value="AT4G02450"/>
</dbReference>
<dbReference type="GeneID" id="828006"/>
<dbReference type="Gramene" id="AT4G02450.1">
    <molecule id="Q8L7U4-1"/>
    <property type="protein sequence ID" value="AT4G02450.1"/>
    <property type="gene ID" value="AT4G02450"/>
</dbReference>
<dbReference type="KEGG" id="ath:AT4G02450"/>
<dbReference type="Araport" id="AT4G02450"/>
<dbReference type="TAIR" id="AT4G02450">
    <property type="gene designation" value="P23-1"/>
</dbReference>
<dbReference type="eggNOG" id="KOG3158">
    <property type="taxonomic scope" value="Eukaryota"/>
</dbReference>
<dbReference type="HOGENOM" id="CLU_078883_2_0_1"/>
<dbReference type="InParanoid" id="Q8L7U4"/>
<dbReference type="OMA" id="EPERWDK"/>
<dbReference type="CD-CODE" id="4299E36E">
    <property type="entry name" value="Nucleolus"/>
</dbReference>
<dbReference type="PRO" id="PR:Q8L7U4"/>
<dbReference type="Proteomes" id="UP000006548">
    <property type="component" value="Chromosome 4"/>
</dbReference>
<dbReference type="ExpressionAtlas" id="Q8L7U4">
    <property type="expression patterns" value="baseline and differential"/>
</dbReference>
<dbReference type="GO" id="GO:0005829">
    <property type="term" value="C:cytosol"/>
    <property type="evidence" value="ECO:0000314"/>
    <property type="project" value="TAIR"/>
</dbReference>
<dbReference type="GO" id="GO:0005634">
    <property type="term" value="C:nucleus"/>
    <property type="evidence" value="ECO:0000314"/>
    <property type="project" value="TAIR"/>
</dbReference>
<dbReference type="GO" id="GO:0005886">
    <property type="term" value="C:plasma membrane"/>
    <property type="evidence" value="ECO:0007005"/>
    <property type="project" value="TAIR"/>
</dbReference>
<dbReference type="GO" id="GO:0009506">
    <property type="term" value="C:plasmodesma"/>
    <property type="evidence" value="ECO:0007005"/>
    <property type="project" value="TAIR"/>
</dbReference>
<dbReference type="GO" id="GO:0101031">
    <property type="term" value="C:protein folding chaperone complex"/>
    <property type="evidence" value="ECO:0000314"/>
    <property type="project" value="UniProtKB"/>
</dbReference>
<dbReference type="GO" id="GO:0051879">
    <property type="term" value="F:Hsp90 protein binding"/>
    <property type="evidence" value="ECO:0000314"/>
    <property type="project" value="UniProtKB"/>
</dbReference>
<dbReference type="GO" id="GO:0051087">
    <property type="term" value="F:protein-folding chaperone binding"/>
    <property type="evidence" value="ECO:0000314"/>
    <property type="project" value="UniProtKB"/>
</dbReference>
<dbReference type="GO" id="GO:0051085">
    <property type="term" value="P:chaperone cofactor-dependent protein refolding"/>
    <property type="evidence" value="ECO:0000314"/>
    <property type="project" value="UniProtKB"/>
</dbReference>
<dbReference type="GO" id="GO:0080037">
    <property type="term" value="P:negative regulation of cytokinin-activated signaling pathway"/>
    <property type="evidence" value="ECO:0000316"/>
    <property type="project" value="TAIR"/>
</dbReference>
<dbReference type="GO" id="GO:0010628">
    <property type="term" value="P:positive regulation of gene expression"/>
    <property type="evidence" value="ECO:0000316"/>
    <property type="project" value="TAIR"/>
</dbReference>
<dbReference type="GO" id="GO:2000012">
    <property type="term" value="P:regulation of auxin polar transport"/>
    <property type="evidence" value="ECO:0000316"/>
    <property type="project" value="TAIR"/>
</dbReference>
<dbReference type="GO" id="GO:0009408">
    <property type="term" value="P:response to heat"/>
    <property type="evidence" value="ECO:0000270"/>
    <property type="project" value="UniProtKB"/>
</dbReference>
<dbReference type="GO" id="GO:0010449">
    <property type="term" value="P:root meristem growth"/>
    <property type="evidence" value="ECO:0000315"/>
    <property type="project" value="TAIR"/>
</dbReference>
<dbReference type="CDD" id="cd06465">
    <property type="entry name" value="p23_hB-ind1_like"/>
    <property type="match status" value="1"/>
</dbReference>
<dbReference type="FunFam" id="2.60.40.790:FF:000013">
    <property type="entry name" value="Very-long-chain (3R)-3-hydroxyacyl-CoA dehydratase"/>
    <property type="match status" value="1"/>
</dbReference>
<dbReference type="Gene3D" id="2.60.40.790">
    <property type="match status" value="1"/>
</dbReference>
<dbReference type="InterPro" id="IPR007052">
    <property type="entry name" value="CS_dom"/>
</dbReference>
<dbReference type="InterPro" id="IPR008978">
    <property type="entry name" value="HSP20-like_chaperone"/>
</dbReference>
<dbReference type="InterPro" id="IPR045250">
    <property type="entry name" value="p23-like"/>
</dbReference>
<dbReference type="PANTHER" id="PTHR22932:SF20">
    <property type="entry name" value="CO-CHAPERONE PROTEIN P23-1"/>
    <property type="match status" value="1"/>
</dbReference>
<dbReference type="PANTHER" id="PTHR22932">
    <property type="entry name" value="TELOMERASE-BINDING PROTEIN P23 HSP90 CO-CHAPERONE"/>
    <property type="match status" value="1"/>
</dbReference>
<dbReference type="Pfam" id="PF04969">
    <property type="entry name" value="CS"/>
    <property type="match status" value="1"/>
</dbReference>
<dbReference type="SUPFAM" id="SSF49764">
    <property type="entry name" value="HSP20-like chaperones"/>
    <property type="match status" value="1"/>
</dbReference>
<dbReference type="PROSITE" id="PS51203">
    <property type="entry name" value="CS"/>
    <property type="match status" value="1"/>
</dbReference>
<feature type="chain" id="PRO_0000444946" description="Co-chaperone protein p23-1">
    <location>
        <begin position="1"/>
        <end position="241"/>
    </location>
</feature>
<feature type="domain" description="CS" evidence="1">
    <location>
        <begin position="2"/>
        <end position="91"/>
    </location>
</feature>
<feature type="repeat" description="MGG 1">
    <location>
        <begin position="129"/>
        <end position="131"/>
    </location>
</feature>
<feature type="repeat" description="MGG 2">
    <location>
        <begin position="132"/>
        <end position="134"/>
    </location>
</feature>
<feature type="repeat" description="MGG 3">
    <location>
        <begin position="135"/>
        <end position="137"/>
    </location>
</feature>
<feature type="repeat" description="MGG 4">
    <location>
        <begin position="138"/>
        <end position="140"/>
    </location>
</feature>
<feature type="repeat" description="MGG 5">
    <location>
        <begin position="141"/>
        <end position="143"/>
    </location>
</feature>
<feature type="repeat" description="MGG 6">
    <location>
        <begin position="144"/>
        <end position="146"/>
    </location>
</feature>
<feature type="repeat" description="MGG 7">
    <location>
        <begin position="147"/>
        <end position="149"/>
    </location>
</feature>
<feature type="repeat" description="MGG 8">
    <location>
        <begin position="150"/>
        <end position="152"/>
    </location>
</feature>
<feature type="repeat" description="MGG 9">
    <location>
        <begin position="162"/>
        <end position="164"/>
    </location>
</feature>
<feature type="repeat" description="MGG 10">
    <location>
        <begin position="165"/>
        <end position="167"/>
    </location>
</feature>
<feature type="repeat" description="MGG 11">
    <location>
        <begin position="168"/>
        <end position="170"/>
    </location>
</feature>
<feature type="repeat" description="MGG 12">
    <location>
        <begin position="171"/>
        <end position="173"/>
    </location>
</feature>
<feature type="repeat" description="MGG 13">
    <location>
        <begin position="180"/>
        <end position="182"/>
    </location>
</feature>
<feature type="repeat" description="MGG 14">
    <location>
        <begin position="183"/>
        <end position="185"/>
    </location>
</feature>
<feature type="repeat" description="MGG 15">
    <location>
        <begin position="186"/>
        <end position="188"/>
    </location>
</feature>
<feature type="repeat" description="MGG 16">
    <location>
        <begin position="189"/>
        <end position="191"/>
    </location>
</feature>
<feature type="repeat" description="MGG 17">
    <location>
        <begin position="192"/>
        <end position="194"/>
    </location>
</feature>
<feature type="region of interest" description="17 X 3 AA repeats of M-G-G">
    <location>
        <begin position="129"/>
        <end position="194"/>
    </location>
</feature>
<feature type="region of interest" description="Disordered" evidence="2">
    <location>
        <begin position="188"/>
        <end position="241"/>
    </location>
</feature>
<feature type="compositionally biased region" description="Acidic residues" evidence="2">
    <location>
        <begin position="196"/>
        <end position="206"/>
    </location>
</feature>
<feature type="compositionally biased region" description="Basic and acidic residues" evidence="2">
    <location>
        <begin position="207"/>
        <end position="224"/>
    </location>
</feature>
<feature type="compositionally biased region" description="Low complexity" evidence="2">
    <location>
        <begin position="225"/>
        <end position="234"/>
    </location>
</feature>
<feature type="splice variant" id="VSP_059664" description="In isoform 2.">
    <original>EGMDFSKLMGG</original>
    <variation>GGMEGMDFSKL</variation>
    <location>
        <begin position="154"/>
        <end position="164"/>
    </location>
</feature>
<feature type="sequence conflict" description="In Ref. 1; CAC16575." evidence="7" ref="1">
    <original>L</original>
    <variation>P</variation>
    <location>
        <position position="223"/>
    </location>
</feature>
<sequence length="241" mass="25471">MSRHPEVKWAETTEKIFLTVVLADTKDTKVNLDPEGVFDFSAKVGPENHVYELKLELADKVNVEESKINIGERSIFCIIEKAEPERWNKLLRVKKPPHYVKVDWDKWVDEDDEGSAGAADMDMAGMEGMGGMGGMGGMGGMGGMGGMGGMGGMEGMDFSKLMGGMGGMGGMGGLEGLGGMGGMGGMGGMGGMGGMEEFEDSDDEEETAKSGDKKDDAVKEEGLATEKAPAAEETTSVKEDK</sequence>
<proteinExistence type="evidence at protein level"/>
<keyword id="KW-0025">Alternative splicing</keyword>
<keyword id="KW-0143">Chaperone</keyword>
<keyword id="KW-0963">Cytoplasm</keyword>
<keyword id="KW-0539">Nucleus</keyword>
<keyword id="KW-0597">Phosphoprotein</keyword>
<keyword id="KW-1185">Reference proteome</keyword>
<keyword id="KW-0677">Repeat</keyword>
<comment type="function">
    <text evidence="3 5">Acts as a co-chaperone for HSP90 (PubMed:20349287). Controls root development through the modulation of auxin distribution in the root meristem (PubMed:26163704).</text>
</comment>
<comment type="subunit">
    <text evidence="3 4">Interacts with HSP90 in an ATP-dependent manner (PubMed:20349287). Interacts with HSP90-5, HSP90-6 and HSP90-7 (PubMed:20493581).</text>
</comment>
<comment type="interaction">
    <interactant intactId="EBI-8417738">
        <id>Q8L7U4</id>
    </interactant>
    <interactant intactId="EBI-8081141">
        <id>Q0Q0I7</id>
        <label>HSP90-2</label>
    </interactant>
    <organismsDiffer>true</organismsDiffer>
    <experiments>2</experiments>
</comment>
<comment type="subcellular location">
    <subcellularLocation>
        <location evidence="5">Cytoplasm</location>
    </subcellularLocation>
    <subcellularLocation>
        <location evidence="5">Nucleus</location>
    </subcellularLocation>
</comment>
<comment type="alternative products">
    <event type="alternative splicing"/>
    <isoform>
        <id>Q8L7U4-1</id>
        <name>1</name>
        <sequence type="displayed"/>
    </isoform>
    <isoform>
        <id>Q8L7U4-2</id>
        <name>2</name>
        <sequence type="described" ref="VSP_059664"/>
    </isoform>
</comment>
<comment type="tissue specificity">
    <text evidence="5">Widely expressed but preferentially in the root meristem.</text>
</comment>
<comment type="induction">
    <text evidence="3">Inhibited by heat shock treatment.</text>
</comment>
<comment type="disruption phenotype">
    <text evidence="5">Short root length. Impaired cell division in the root meristem.</text>
</comment>
<comment type="similarity">
    <text evidence="7">Belongs to the p23/wos2 family.</text>
</comment>
<comment type="sequence caution" evidence="7">
    <conflict type="erroneous gene model prediction">
        <sequence resource="EMBL-CDS" id="AAC19287"/>
    </conflict>
</comment>
<comment type="sequence caution" evidence="7">
    <conflict type="erroneous gene model prediction">
        <sequence resource="EMBL-CDS" id="CAB80738"/>
    </conflict>
</comment>
<gene>
    <name evidence="7" type="primary">P23-1</name>
    <name evidence="10" type="synonym">P23</name>
    <name evidence="8" type="ordered locus">At4g02450</name>
    <name evidence="9" type="ORF">T14P8.5</name>
</gene>
<protein>
    <recommendedName>
        <fullName evidence="7">Co-chaperone protein p23-1</fullName>
    </recommendedName>
    <alternativeName>
        <fullName evidence="6">Atp23-1</fullName>
    </alternativeName>
    <alternativeName>
        <fullName evidence="10">p23 co-chaperone</fullName>
    </alternativeName>
</protein>
<name>P23A_ARATH</name>
<accession>Q8L7U4</accession>
<accession>O81288</accession>
<accession>Q9FT78</accession>